<evidence type="ECO:0000255" key="1">
    <source>
        <dbReference type="HAMAP-Rule" id="MF_01569"/>
    </source>
</evidence>
<reference key="1">
    <citation type="submission" date="2009-04" db="EMBL/GenBank/DDBJ databases">
        <title>Genome sequence of Bacillus anthracis A0248.</title>
        <authorList>
            <person name="Dodson R.J."/>
            <person name="Munk A.C."/>
            <person name="Bruce D."/>
            <person name="Detter C."/>
            <person name="Tapia R."/>
            <person name="Sutton G."/>
            <person name="Sims D."/>
            <person name="Brettin T."/>
        </authorList>
    </citation>
    <scope>NUCLEOTIDE SEQUENCE [LARGE SCALE GENOMIC DNA]</scope>
    <source>
        <strain>A0248</strain>
    </source>
</reference>
<feature type="chain" id="PRO_1000185484" description="Proline--tRNA ligase">
    <location>
        <begin position="1"/>
        <end position="566"/>
    </location>
</feature>
<accession>C3P5M1</accession>
<gene>
    <name evidence="1" type="primary">proS</name>
    <name type="ordered locus">BAA_3980</name>
</gene>
<comment type="function">
    <text evidence="1">Catalyzes the attachment of proline to tRNA(Pro) in a two-step reaction: proline is first activated by ATP to form Pro-AMP and then transferred to the acceptor end of tRNA(Pro). As ProRS can inadvertently accommodate and process non-cognate amino acids such as alanine and cysteine, to avoid such errors it has two additional distinct editing activities against alanine. One activity is designated as 'pretransfer' editing and involves the tRNA(Pro)-independent hydrolysis of activated Ala-AMP. The other activity is designated 'posttransfer' editing and involves deacylation of mischarged Ala-tRNA(Pro). The misacylated Cys-tRNA(Pro) is not edited by ProRS.</text>
</comment>
<comment type="catalytic activity">
    <reaction evidence="1">
        <text>tRNA(Pro) + L-proline + ATP = L-prolyl-tRNA(Pro) + AMP + diphosphate</text>
        <dbReference type="Rhea" id="RHEA:14305"/>
        <dbReference type="Rhea" id="RHEA-COMP:9700"/>
        <dbReference type="Rhea" id="RHEA-COMP:9702"/>
        <dbReference type="ChEBI" id="CHEBI:30616"/>
        <dbReference type="ChEBI" id="CHEBI:33019"/>
        <dbReference type="ChEBI" id="CHEBI:60039"/>
        <dbReference type="ChEBI" id="CHEBI:78442"/>
        <dbReference type="ChEBI" id="CHEBI:78532"/>
        <dbReference type="ChEBI" id="CHEBI:456215"/>
        <dbReference type="EC" id="6.1.1.15"/>
    </reaction>
</comment>
<comment type="subunit">
    <text evidence="1">Homodimer.</text>
</comment>
<comment type="subcellular location">
    <subcellularLocation>
        <location evidence="1">Cytoplasm</location>
    </subcellularLocation>
</comment>
<comment type="domain">
    <text evidence="1">Consists of three domains: the N-terminal catalytic domain, the editing domain and the C-terminal anticodon-binding domain.</text>
</comment>
<comment type="similarity">
    <text evidence="1">Belongs to the class-II aminoacyl-tRNA synthetase family. ProS type 1 subfamily.</text>
</comment>
<keyword id="KW-0030">Aminoacyl-tRNA synthetase</keyword>
<keyword id="KW-0067">ATP-binding</keyword>
<keyword id="KW-0963">Cytoplasm</keyword>
<keyword id="KW-0436">Ligase</keyword>
<keyword id="KW-0547">Nucleotide-binding</keyword>
<keyword id="KW-0648">Protein biosynthesis</keyword>
<dbReference type="EC" id="6.1.1.15" evidence="1"/>
<dbReference type="EMBL" id="CP001598">
    <property type="protein sequence ID" value="ACQ48409.1"/>
    <property type="molecule type" value="Genomic_DNA"/>
</dbReference>
<dbReference type="RefSeq" id="WP_000814312.1">
    <property type="nucleotide sequence ID" value="NC_012659.1"/>
</dbReference>
<dbReference type="SMR" id="C3P5M1"/>
<dbReference type="GeneID" id="45023647"/>
<dbReference type="KEGG" id="bai:BAA_3980"/>
<dbReference type="HOGENOM" id="CLU_016739_0_0_9"/>
<dbReference type="GO" id="GO:0005829">
    <property type="term" value="C:cytosol"/>
    <property type="evidence" value="ECO:0007669"/>
    <property type="project" value="TreeGrafter"/>
</dbReference>
<dbReference type="GO" id="GO:0002161">
    <property type="term" value="F:aminoacyl-tRNA deacylase activity"/>
    <property type="evidence" value="ECO:0007669"/>
    <property type="project" value="InterPro"/>
</dbReference>
<dbReference type="GO" id="GO:0005524">
    <property type="term" value="F:ATP binding"/>
    <property type="evidence" value="ECO:0007669"/>
    <property type="project" value="UniProtKB-UniRule"/>
</dbReference>
<dbReference type="GO" id="GO:0140096">
    <property type="term" value="F:catalytic activity, acting on a protein"/>
    <property type="evidence" value="ECO:0007669"/>
    <property type="project" value="UniProtKB-ARBA"/>
</dbReference>
<dbReference type="GO" id="GO:0004827">
    <property type="term" value="F:proline-tRNA ligase activity"/>
    <property type="evidence" value="ECO:0007669"/>
    <property type="project" value="UniProtKB-UniRule"/>
</dbReference>
<dbReference type="GO" id="GO:0016740">
    <property type="term" value="F:transferase activity"/>
    <property type="evidence" value="ECO:0007669"/>
    <property type="project" value="UniProtKB-ARBA"/>
</dbReference>
<dbReference type="GO" id="GO:0006433">
    <property type="term" value="P:prolyl-tRNA aminoacylation"/>
    <property type="evidence" value="ECO:0007669"/>
    <property type="project" value="UniProtKB-UniRule"/>
</dbReference>
<dbReference type="CDD" id="cd04334">
    <property type="entry name" value="ProRS-INS"/>
    <property type="match status" value="1"/>
</dbReference>
<dbReference type="CDD" id="cd00861">
    <property type="entry name" value="ProRS_anticodon_short"/>
    <property type="match status" value="1"/>
</dbReference>
<dbReference type="CDD" id="cd00779">
    <property type="entry name" value="ProRS_core_prok"/>
    <property type="match status" value="1"/>
</dbReference>
<dbReference type="FunFam" id="3.30.930.10:FF:000043">
    <property type="entry name" value="Proline--tRNA ligase"/>
    <property type="match status" value="1"/>
</dbReference>
<dbReference type="FunFam" id="3.30.930.10:FF:000065">
    <property type="entry name" value="Proline--tRNA ligase"/>
    <property type="match status" value="1"/>
</dbReference>
<dbReference type="FunFam" id="3.40.50.800:FF:000011">
    <property type="entry name" value="Proline--tRNA ligase"/>
    <property type="match status" value="1"/>
</dbReference>
<dbReference type="Gene3D" id="3.40.50.800">
    <property type="entry name" value="Anticodon-binding domain"/>
    <property type="match status" value="1"/>
</dbReference>
<dbReference type="Gene3D" id="3.30.930.10">
    <property type="entry name" value="Bira Bifunctional Protein, Domain 2"/>
    <property type="match status" value="2"/>
</dbReference>
<dbReference type="HAMAP" id="MF_01569">
    <property type="entry name" value="Pro_tRNA_synth_type1"/>
    <property type="match status" value="1"/>
</dbReference>
<dbReference type="InterPro" id="IPR002314">
    <property type="entry name" value="aa-tRNA-synt_IIb"/>
</dbReference>
<dbReference type="InterPro" id="IPR006195">
    <property type="entry name" value="aa-tRNA-synth_II"/>
</dbReference>
<dbReference type="InterPro" id="IPR045864">
    <property type="entry name" value="aa-tRNA-synth_II/BPL/LPL"/>
</dbReference>
<dbReference type="InterPro" id="IPR004154">
    <property type="entry name" value="Anticodon-bd"/>
</dbReference>
<dbReference type="InterPro" id="IPR036621">
    <property type="entry name" value="Anticodon-bd_dom_sf"/>
</dbReference>
<dbReference type="InterPro" id="IPR002316">
    <property type="entry name" value="Pro-tRNA-ligase_IIa"/>
</dbReference>
<dbReference type="InterPro" id="IPR004500">
    <property type="entry name" value="Pro-tRNA-synth_IIa_bac-type"/>
</dbReference>
<dbReference type="InterPro" id="IPR023717">
    <property type="entry name" value="Pro-tRNA-Synthase_IIa_type1"/>
</dbReference>
<dbReference type="InterPro" id="IPR050062">
    <property type="entry name" value="Pro-tRNA_synthetase"/>
</dbReference>
<dbReference type="InterPro" id="IPR044140">
    <property type="entry name" value="ProRS_anticodon_short"/>
</dbReference>
<dbReference type="InterPro" id="IPR033730">
    <property type="entry name" value="ProRS_core_prok"/>
</dbReference>
<dbReference type="InterPro" id="IPR036754">
    <property type="entry name" value="YbaK/aa-tRNA-synt-asso_dom_sf"/>
</dbReference>
<dbReference type="InterPro" id="IPR007214">
    <property type="entry name" value="YbaK/aa-tRNA-synth-assoc-dom"/>
</dbReference>
<dbReference type="NCBIfam" id="NF006625">
    <property type="entry name" value="PRK09194.1"/>
    <property type="match status" value="1"/>
</dbReference>
<dbReference type="NCBIfam" id="TIGR00409">
    <property type="entry name" value="proS_fam_II"/>
    <property type="match status" value="1"/>
</dbReference>
<dbReference type="PANTHER" id="PTHR42753">
    <property type="entry name" value="MITOCHONDRIAL RIBOSOME PROTEIN L39/PROLYL-TRNA LIGASE FAMILY MEMBER"/>
    <property type="match status" value="1"/>
</dbReference>
<dbReference type="PANTHER" id="PTHR42753:SF2">
    <property type="entry name" value="PROLINE--TRNA LIGASE"/>
    <property type="match status" value="1"/>
</dbReference>
<dbReference type="Pfam" id="PF03129">
    <property type="entry name" value="HGTP_anticodon"/>
    <property type="match status" value="1"/>
</dbReference>
<dbReference type="Pfam" id="PF00587">
    <property type="entry name" value="tRNA-synt_2b"/>
    <property type="match status" value="1"/>
</dbReference>
<dbReference type="Pfam" id="PF04073">
    <property type="entry name" value="tRNA_edit"/>
    <property type="match status" value="1"/>
</dbReference>
<dbReference type="PIRSF" id="PIRSF001535">
    <property type="entry name" value="ProRS_1"/>
    <property type="match status" value="1"/>
</dbReference>
<dbReference type="PRINTS" id="PR01046">
    <property type="entry name" value="TRNASYNTHPRO"/>
</dbReference>
<dbReference type="SUPFAM" id="SSF52954">
    <property type="entry name" value="Class II aaRS ABD-related"/>
    <property type="match status" value="1"/>
</dbReference>
<dbReference type="SUPFAM" id="SSF55681">
    <property type="entry name" value="Class II aaRS and biotin synthetases"/>
    <property type="match status" value="1"/>
</dbReference>
<dbReference type="SUPFAM" id="SSF55826">
    <property type="entry name" value="YbaK/ProRS associated domain"/>
    <property type="match status" value="1"/>
</dbReference>
<dbReference type="PROSITE" id="PS50862">
    <property type="entry name" value="AA_TRNA_LIGASE_II"/>
    <property type="match status" value="1"/>
</dbReference>
<proteinExistence type="inferred from homology"/>
<organism>
    <name type="scientific">Bacillus anthracis (strain A0248)</name>
    <dbReference type="NCBI Taxonomy" id="592021"/>
    <lineage>
        <taxon>Bacteria</taxon>
        <taxon>Bacillati</taxon>
        <taxon>Bacillota</taxon>
        <taxon>Bacilli</taxon>
        <taxon>Bacillales</taxon>
        <taxon>Bacillaceae</taxon>
        <taxon>Bacillus</taxon>
        <taxon>Bacillus cereus group</taxon>
    </lineage>
</organism>
<protein>
    <recommendedName>
        <fullName evidence="1">Proline--tRNA ligase</fullName>
        <ecNumber evidence="1">6.1.1.15</ecNumber>
    </recommendedName>
    <alternativeName>
        <fullName evidence="1">Prolyl-tRNA synthetase</fullName>
        <shortName evidence="1">ProRS</shortName>
    </alternativeName>
</protein>
<sequence>MKQSMVFSPTLREVPADAEIKSHQLLLRAGFMRQNASGIYSFLPFGLKVLHKVERIVREEMERAGAVELLMPAMQAAELWQESGRWYSYGSELMRMKDRNAREFALGATHEEVITDLVRDEVKSYKKLPLTLYQIQTKFRDEQRPRFGLLRGREFLMKDAYSFHATQESLDEVYDRLYKAYSNIFARCGLNFRAVIADSGAMGGKDTHEFMVLSDVGEDTIAYSDTSDYAANIEMAPVVATYTKSDEAEKELEKVATPDQKAIEEVSAFLNIEADKCIKSMVFKVDEKLVVVLVRGDHEVNDVKVKNVYGASVVELASHEEVKELLNCEVGSLGPIGVNGDIEIIADHAVASIVNGCSGANEEGFHYVNVNPERDFKVSQYTDLRFIQEGDQSPDGNGTILFARGIEVGHVFKLGTRYSEAMNATFLDENGKTQPLIMGCYGIGVSRTVAAIAEQFNDENGLVWPKAVAPFHVHVIPVNMKSDAQREMGENIYNSLQEQGYEVLLDDRAERAGVKFADADLFGLPVRVTVGKKADEGIVEVKVRATGESEEVKVEELQTYIANILK</sequence>
<name>SYP_BACAA</name>